<evidence type="ECO:0000250" key="1">
    <source>
        <dbReference type="UniProtKB" id="P04798"/>
    </source>
</evidence>
<evidence type="ECO:0000255" key="2"/>
<evidence type="ECO:0000269" key="3">
    <source>
    </source>
</evidence>
<evidence type="ECO:0000303" key="4">
    <source>
    </source>
</evidence>
<evidence type="ECO:0000305" key="5"/>
<organism>
    <name type="scientific">Cladobotryum sp</name>
    <dbReference type="NCBI Taxonomy" id="2040732"/>
    <lineage>
        <taxon>Eukaryota</taxon>
        <taxon>Fungi</taxon>
        <taxon>Dikarya</taxon>
        <taxon>Ascomycota</taxon>
        <taxon>Pezizomycotina</taxon>
        <taxon>Sordariomycetes</taxon>
        <taxon>Hypocreomycetidae</taxon>
        <taxon>Hypocreales</taxon>
        <taxon>Hypocreaceae</taxon>
        <taxon>Cladobotryum</taxon>
    </lineage>
</organism>
<accession>A0A7T8F1I4</accession>
<feature type="chain" id="PRO_0000462330" description="Cytochrome P450 monooxygenase FrzC">
    <location>
        <begin position="1"/>
        <end position="495"/>
    </location>
</feature>
<feature type="transmembrane region" description="Helical" evidence="2">
    <location>
        <begin position="8"/>
        <end position="28"/>
    </location>
</feature>
<feature type="binding site" description="axial binding residue" evidence="1">
    <location>
        <position position="437"/>
    </location>
    <ligand>
        <name>heme</name>
        <dbReference type="ChEBI" id="CHEBI:30413"/>
    </ligand>
    <ligandPart>
        <name>Fe</name>
        <dbReference type="ChEBI" id="CHEBI:18248"/>
    </ligandPart>
</feature>
<protein>
    <recommendedName>
        <fullName evidence="4">Cytochrome P450 monooxygenase FrzC</fullName>
        <ecNumber evidence="3">1.14.14.-</ecNumber>
    </recommendedName>
    <alternativeName>
        <fullName evidence="4">FR901483 biosynthesis cluster protein C</fullName>
    </alternativeName>
</protein>
<name>FRZC_CLASX</name>
<dbReference type="EC" id="1.14.14.-" evidence="3"/>
<dbReference type="EMBL" id="MW322046">
    <property type="protein sequence ID" value="QQO98482.1"/>
    <property type="molecule type" value="Genomic_DNA"/>
</dbReference>
<dbReference type="GO" id="GO:0016020">
    <property type="term" value="C:membrane"/>
    <property type="evidence" value="ECO:0007669"/>
    <property type="project" value="UniProtKB-KW"/>
</dbReference>
<dbReference type="GO" id="GO:0020037">
    <property type="term" value="F:heme binding"/>
    <property type="evidence" value="ECO:0007669"/>
    <property type="project" value="InterPro"/>
</dbReference>
<dbReference type="GO" id="GO:0005506">
    <property type="term" value="F:iron ion binding"/>
    <property type="evidence" value="ECO:0007669"/>
    <property type="project" value="InterPro"/>
</dbReference>
<dbReference type="GO" id="GO:0004497">
    <property type="term" value="F:monooxygenase activity"/>
    <property type="evidence" value="ECO:0007669"/>
    <property type="project" value="InterPro"/>
</dbReference>
<dbReference type="GO" id="GO:0016705">
    <property type="term" value="F:oxidoreductase activity, acting on paired donors, with incorporation or reduction of molecular oxygen"/>
    <property type="evidence" value="ECO:0007669"/>
    <property type="project" value="InterPro"/>
</dbReference>
<dbReference type="GO" id="GO:0009058">
    <property type="term" value="P:biosynthetic process"/>
    <property type="evidence" value="ECO:0007669"/>
    <property type="project" value="UniProtKB-ARBA"/>
</dbReference>
<dbReference type="CDD" id="cd11058">
    <property type="entry name" value="CYP60B-like"/>
    <property type="match status" value="1"/>
</dbReference>
<dbReference type="Gene3D" id="1.10.630.10">
    <property type="entry name" value="Cytochrome P450"/>
    <property type="match status" value="1"/>
</dbReference>
<dbReference type="InterPro" id="IPR001128">
    <property type="entry name" value="Cyt_P450"/>
</dbReference>
<dbReference type="InterPro" id="IPR002401">
    <property type="entry name" value="Cyt_P450_E_grp-I"/>
</dbReference>
<dbReference type="InterPro" id="IPR036396">
    <property type="entry name" value="Cyt_P450_sf"/>
</dbReference>
<dbReference type="InterPro" id="IPR050121">
    <property type="entry name" value="Cytochrome_P450_monoxygenase"/>
</dbReference>
<dbReference type="PANTHER" id="PTHR24305">
    <property type="entry name" value="CYTOCHROME P450"/>
    <property type="match status" value="1"/>
</dbReference>
<dbReference type="PANTHER" id="PTHR24305:SF210">
    <property type="entry name" value="CYTOCHROME P450 MONOOXYGENASE ASQL-RELATED"/>
    <property type="match status" value="1"/>
</dbReference>
<dbReference type="Pfam" id="PF00067">
    <property type="entry name" value="p450"/>
    <property type="match status" value="1"/>
</dbReference>
<dbReference type="PRINTS" id="PR00463">
    <property type="entry name" value="EP450I"/>
</dbReference>
<dbReference type="PRINTS" id="PR00385">
    <property type="entry name" value="P450"/>
</dbReference>
<dbReference type="SUPFAM" id="SSF48264">
    <property type="entry name" value="Cytochrome P450"/>
    <property type="match status" value="1"/>
</dbReference>
<sequence>MDLLQRAGLVVGLWVTYHILLGTYNVFFHPLRRFPGPRLAAATQLVNVYYIIRGINCKYLYELHEKYGDVVRTGPNELSFRTASAIRTIYGGNPGPDDTFHKNMIANIQETGDSDNLFFATGQQHNRYRRLIMPVFAERTIQGQGPMMQEYCSQLIQGLRNRCGRGYFPTQDGVVDIVPWTHFIISDILSHMLFGSGMNCLLNGDYHPWVMAGYKALIESTYIEAAHRLRPYHRILEYLLIPTRLRDGFRVHSAVSREKLQARSKEAEPYQFSLPSFTSESLSEQELFDNINVIATAAGETTSSALSAIMYYLTANPAAYDKAVTEVRQAFSNEAEITAASSASLPYLKAVIREAFRIRPTIPVGLHRLTPKGGREIDGKWVPAGTWISVANLAACRTSSHWKEAGRFIPERWLGDPEFASDNRDTSVPYSIGVRNCIGMSHANTQLRLILSRLLWNFDFEACPGNADPYDYLEYGTWQVEPLKLRVVDIRGQPK</sequence>
<reference key="1">
    <citation type="journal article" date="2021" name="J. Am. Chem. Soc.">
        <title>Biosynthesis of the Immunosuppressant (-)-FR901483.</title>
        <authorList>
            <person name="Zhang Z."/>
            <person name="Tamura Y."/>
            <person name="Tang M."/>
            <person name="Qiao T."/>
            <person name="Sato M."/>
            <person name="Otsu Y."/>
            <person name="Sasamura S."/>
            <person name="Taniguchi M."/>
            <person name="Watanabe K."/>
            <person name="Tang Y."/>
        </authorList>
    </citation>
    <scope>NUCLEOTIDE SEQUENCE [GENOMIC DNA]</scope>
    <scope>FUNCTION</scope>
    <scope>CATALYTIC ACTIVITY</scope>
    <scope>PATHWAY</scope>
    <source>
        <strain>11231</strain>
    </source>
</reference>
<gene>
    <name evidence="4" type="primary">FrzC</name>
</gene>
<keyword id="KW-0349">Heme</keyword>
<keyword id="KW-0408">Iron</keyword>
<keyword id="KW-0472">Membrane</keyword>
<keyword id="KW-0479">Metal-binding</keyword>
<keyword id="KW-0503">Monooxygenase</keyword>
<keyword id="KW-0560">Oxidoreductase</keyword>
<keyword id="KW-0812">Transmembrane</keyword>
<keyword id="KW-1133">Transmembrane helix</keyword>
<proteinExistence type="evidence at protein level"/>
<comment type="function">
    <text evidence="3">Cytochrome P450 monooxygenase; part of the gene cluster that mediates the biosynthesis of the alkaloid (-)-FR901483, a potent immunosuppressant that shows efficacy in animal models and a probable inhibitor of purine nucleotide biosynthesis by targeting phosphoribosylpyrophosphate amidotransferase (PPAT) (PubMed:33372776). Within the pathway, FrzC catalyzes the coupling between N10 and C1' to produce a 1,4-diazabicyclo[3.2.1]octane spiro-fused to a 2,5-cyclohexadienone. FrzC probably first catalyzes homolysis of the N-H bond to generate the N10 radical which is followed by an O-H abstraction to give the phenolic radical which can be delocalized to C1'. Radical coupling between N10 and C1' then forms (PubMed:33372776). The biosynthesis of (-)-FR901483 starts with the condensation of two L-tyrosines to yield (S,S)-dityrosyl-piperazine. This process occurs in 3 steps with the non-canonical nonribosomal peptide synthetase FrzA catalyzing the reduction of L-tyrosine into L-tyrosinal, the spontaneous condensation of 2 L-tyrosinal units, and the subsequent reduction by the NmrA-like family domain-containing oxidoreductase FrzB. The cytochrome P450 monooxygenase FrzC then performs coupling between N10 and C1' to morph the piperazine into a 1,4-diazabicyclo[3.2.1]octane spiro-fused to a 2,5-cyclohexadienone. The dienone portion is further reduced to cyclohexanone by the flavin-dependent reductase FrzD. The methyltranserases (MTs) FrzE and FrzF are then involved in the methylation at the C10' amine and the C4 phenolic oxygen, respectively. The order of the two MTs appear to be interchangeable. Cleavage of the C9-N10' bond by the dioxygenase FrzG then leads to formation of a conjugated iminium. In addition to the oxidation of C9, an additional dehydrogenation between C7 and C8 can occur to give a likely shunt product. The next biosynthetic step is the intramolecular aldol condensation catalyzed by the newly identified aldolase FrzH to yield an aza-tricyclic product with the formation of a C9-C3' bond (PubMed:33372776). The short-chain dehydrogenase/reductase FrzI then produces dephospho-(-)-FR901483 that is phosphorylated at C4'-OH into (-)-FR901483 by the phosphotransferase FrzJ (PubMed:33372776).</text>
</comment>
<comment type="catalytic activity">
    <reaction evidence="3">
        <text>(S,S)-2,5-di-(p-hydroxybenzyl)piperazine + reduced [NADPH--hemoprotein reductase] + O2 = (1S,4S)-4-[(4-hydroxyphenyl)methyl]-2,5-diazaspiro[bicyclo[3.2.1]octane-6,1'-cyclohexane]-2',5'-dien-4'-one + oxidized [NADPH--hemoprotein reductase] + 2 H2O + H(+)</text>
        <dbReference type="Rhea" id="RHEA:83579"/>
        <dbReference type="Rhea" id="RHEA-COMP:11964"/>
        <dbReference type="Rhea" id="RHEA-COMP:11965"/>
        <dbReference type="ChEBI" id="CHEBI:15377"/>
        <dbReference type="ChEBI" id="CHEBI:15378"/>
        <dbReference type="ChEBI" id="CHEBI:15379"/>
        <dbReference type="ChEBI" id="CHEBI:57618"/>
        <dbReference type="ChEBI" id="CHEBI:58210"/>
        <dbReference type="ChEBI" id="CHEBI:145882"/>
        <dbReference type="ChEBI" id="CHEBI:233174"/>
    </reaction>
    <physiologicalReaction direction="left-to-right" evidence="3">
        <dbReference type="Rhea" id="RHEA:83580"/>
    </physiologicalReaction>
</comment>
<comment type="cofactor">
    <cofactor evidence="1">
        <name>heme</name>
        <dbReference type="ChEBI" id="CHEBI:30413"/>
    </cofactor>
</comment>
<comment type="pathway">
    <text evidence="3">Secondary metabolite biosynthesis.</text>
</comment>
<comment type="subcellular location">
    <subcellularLocation>
        <location evidence="2">Membrane</location>
        <topology evidence="2">Single-pass membrane protein</topology>
    </subcellularLocation>
</comment>
<comment type="similarity">
    <text evidence="5">Belongs to the cytochrome P450 family.</text>
</comment>